<organism>
    <name type="scientific">Dictyostelium discoideum</name>
    <name type="common">Social amoeba</name>
    <dbReference type="NCBI Taxonomy" id="44689"/>
    <lineage>
        <taxon>Eukaryota</taxon>
        <taxon>Amoebozoa</taxon>
        <taxon>Evosea</taxon>
        <taxon>Eumycetozoa</taxon>
        <taxon>Dictyostelia</taxon>
        <taxon>Dictyosteliales</taxon>
        <taxon>Dictyosteliaceae</taxon>
        <taxon>Dictyostelium</taxon>
    </lineage>
</organism>
<reference key="1">
    <citation type="journal article" date="2005" name="Nature">
        <title>The genome of the social amoeba Dictyostelium discoideum.</title>
        <authorList>
            <person name="Eichinger L."/>
            <person name="Pachebat J.A."/>
            <person name="Gloeckner G."/>
            <person name="Rajandream M.A."/>
            <person name="Sucgang R."/>
            <person name="Berriman M."/>
            <person name="Song J."/>
            <person name="Olsen R."/>
            <person name="Szafranski K."/>
            <person name="Xu Q."/>
            <person name="Tunggal B."/>
            <person name="Kummerfeld S."/>
            <person name="Madera M."/>
            <person name="Konfortov B.A."/>
            <person name="Rivero F."/>
            <person name="Bankier A.T."/>
            <person name="Lehmann R."/>
            <person name="Hamlin N."/>
            <person name="Davies R."/>
            <person name="Gaudet P."/>
            <person name="Fey P."/>
            <person name="Pilcher K."/>
            <person name="Chen G."/>
            <person name="Saunders D."/>
            <person name="Sodergren E.J."/>
            <person name="Davis P."/>
            <person name="Kerhornou A."/>
            <person name="Nie X."/>
            <person name="Hall N."/>
            <person name="Anjard C."/>
            <person name="Hemphill L."/>
            <person name="Bason N."/>
            <person name="Farbrother P."/>
            <person name="Desany B."/>
            <person name="Just E."/>
            <person name="Morio T."/>
            <person name="Rost R."/>
            <person name="Churcher C.M."/>
            <person name="Cooper J."/>
            <person name="Haydock S."/>
            <person name="van Driessche N."/>
            <person name="Cronin A."/>
            <person name="Goodhead I."/>
            <person name="Muzny D.M."/>
            <person name="Mourier T."/>
            <person name="Pain A."/>
            <person name="Lu M."/>
            <person name="Harper D."/>
            <person name="Lindsay R."/>
            <person name="Hauser H."/>
            <person name="James K.D."/>
            <person name="Quiles M."/>
            <person name="Madan Babu M."/>
            <person name="Saito T."/>
            <person name="Buchrieser C."/>
            <person name="Wardroper A."/>
            <person name="Felder M."/>
            <person name="Thangavelu M."/>
            <person name="Johnson D."/>
            <person name="Knights A."/>
            <person name="Loulseged H."/>
            <person name="Mungall K.L."/>
            <person name="Oliver K."/>
            <person name="Price C."/>
            <person name="Quail M.A."/>
            <person name="Urushihara H."/>
            <person name="Hernandez J."/>
            <person name="Rabbinowitsch E."/>
            <person name="Steffen D."/>
            <person name="Sanders M."/>
            <person name="Ma J."/>
            <person name="Kohara Y."/>
            <person name="Sharp S."/>
            <person name="Simmonds M.N."/>
            <person name="Spiegler S."/>
            <person name="Tivey A."/>
            <person name="Sugano S."/>
            <person name="White B."/>
            <person name="Walker D."/>
            <person name="Woodward J.R."/>
            <person name="Winckler T."/>
            <person name="Tanaka Y."/>
            <person name="Shaulsky G."/>
            <person name="Schleicher M."/>
            <person name="Weinstock G.M."/>
            <person name="Rosenthal A."/>
            <person name="Cox E.C."/>
            <person name="Chisholm R.L."/>
            <person name="Gibbs R.A."/>
            <person name="Loomis W.F."/>
            <person name="Platzer M."/>
            <person name="Kay R.R."/>
            <person name="Williams J.G."/>
            <person name="Dear P.H."/>
            <person name="Noegel A.A."/>
            <person name="Barrell B.G."/>
            <person name="Kuspa A."/>
        </authorList>
    </citation>
    <scope>NUCLEOTIDE SEQUENCE [LARGE SCALE GENOMIC DNA]</scope>
    <source>
        <strain>AX4</strain>
    </source>
</reference>
<sequence>MQNIGFAAGSLIKGRWTVVKKIGQGAFGEIFSGKNIINNEQIAIKVEKVDTKKQVLRLEVAVLKKLQLCPYVCRFITCGRHNDYNYMVMELLGENLSELRRKQLDGKFSLGSTLKLGVQMIQSLQAVHDLGYLHRDVKPSNFAIGLNPSKRNITYLIDFGLARRFVLASGEVRPARESTGFRGTARYASINSHLSKDLGRRDDLWSIFYVLIEFAEGQLPWRKLKDKDQIGEMKQKYNTPDLVKDLPPQFSQFMKHLKSLNYEDRPNYVFLQTLLNDCYTSLGLSESTPFDWEVQTNSGASSSSSNTTQQQQQQQQQQQQRNLNQSGLNNSSARLMASPSTIDVEASGKSTQLNNSNNNNNNNNKGLGAENDSSPQPQIIRRNSESNSQIANSSESDNKGSGGGSWNQKSSSPRHKDKNLQDDGGEGSQKHLKASNNNNINNNNNNYNNNNNNNNNSHMNGNGSNSQPIDKIELSHQQQKSSTTKCCSTSKCSVM</sequence>
<comment type="similarity">
    <text evidence="3">Belongs to the protein kinase superfamily. CK1 Ser/Thr protein kinase family.</text>
</comment>
<feature type="chain" id="PRO_0000384441" description="Probable serine/threonine-protein kinase DDB_G0292354">
    <location>
        <begin position="1"/>
        <end position="495"/>
    </location>
</feature>
<feature type="domain" description="Protein kinase" evidence="1">
    <location>
        <begin position="16"/>
        <end position="275"/>
    </location>
</feature>
<feature type="region of interest" description="Disordered" evidence="2">
    <location>
        <begin position="293"/>
        <end position="469"/>
    </location>
</feature>
<feature type="compositionally biased region" description="Low complexity" evidence="2">
    <location>
        <begin position="295"/>
        <end position="333"/>
    </location>
</feature>
<feature type="compositionally biased region" description="Low complexity" evidence="2">
    <location>
        <begin position="354"/>
        <end position="364"/>
    </location>
</feature>
<feature type="compositionally biased region" description="Polar residues" evidence="2">
    <location>
        <begin position="385"/>
        <end position="395"/>
    </location>
</feature>
<feature type="compositionally biased region" description="Low complexity" evidence="2">
    <location>
        <begin position="435"/>
        <end position="466"/>
    </location>
</feature>
<feature type="active site" description="Proton acceptor" evidence="1">
    <location>
        <position position="136"/>
    </location>
</feature>
<feature type="binding site" evidence="1">
    <location>
        <begin position="22"/>
        <end position="30"/>
    </location>
    <ligand>
        <name>ATP</name>
        <dbReference type="ChEBI" id="CHEBI:30616"/>
    </ligand>
</feature>
<feature type="binding site" evidence="1">
    <location>
        <position position="45"/>
    </location>
    <ligand>
        <name>ATP</name>
        <dbReference type="ChEBI" id="CHEBI:30616"/>
    </ligand>
</feature>
<proteinExistence type="inferred from homology"/>
<evidence type="ECO:0000255" key="1">
    <source>
        <dbReference type="PROSITE-ProRule" id="PRU00159"/>
    </source>
</evidence>
<evidence type="ECO:0000256" key="2">
    <source>
        <dbReference type="SAM" id="MobiDB-lite"/>
    </source>
</evidence>
<evidence type="ECO:0000305" key="3"/>
<gene>
    <name type="ORF">DDB_G0292354</name>
</gene>
<name>Y2354_DICDI</name>
<dbReference type="EMBL" id="AAFI02000189">
    <property type="protein sequence ID" value="EAL61301.1"/>
    <property type="molecule type" value="Genomic_DNA"/>
</dbReference>
<dbReference type="RefSeq" id="XP_629684.1">
    <property type="nucleotide sequence ID" value="XM_629682.1"/>
</dbReference>
<dbReference type="SMR" id="Q54DF7"/>
<dbReference type="STRING" id="44689.Q54DF7"/>
<dbReference type="PaxDb" id="44689-DDB0216336"/>
<dbReference type="EnsemblProtists" id="EAL61301">
    <property type="protein sequence ID" value="EAL61301"/>
    <property type="gene ID" value="DDB_G0292354"/>
</dbReference>
<dbReference type="GeneID" id="8628600"/>
<dbReference type="KEGG" id="ddi:DDB_G0292354"/>
<dbReference type="dictyBase" id="DDB_G0292354"/>
<dbReference type="VEuPathDB" id="AmoebaDB:DDB_G0292354"/>
<dbReference type="eggNOG" id="KOG1164">
    <property type="taxonomic scope" value="Eukaryota"/>
</dbReference>
<dbReference type="HOGENOM" id="CLU_019279_2_7_1"/>
<dbReference type="InParanoid" id="Q54DF7"/>
<dbReference type="OMA" id="NTFNGRE"/>
<dbReference type="PhylomeDB" id="Q54DF7"/>
<dbReference type="PRO" id="PR:Q54DF7"/>
<dbReference type="Proteomes" id="UP000002195">
    <property type="component" value="Chromosome 6"/>
</dbReference>
<dbReference type="GO" id="GO:0005737">
    <property type="term" value="C:cytoplasm"/>
    <property type="evidence" value="ECO:0000318"/>
    <property type="project" value="GO_Central"/>
</dbReference>
<dbReference type="GO" id="GO:0005634">
    <property type="term" value="C:nucleus"/>
    <property type="evidence" value="ECO:0000318"/>
    <property type="project" value="GO_Central"/>
</dbReference>
<dbReference type="GO" id="GO:0005524">
    <property type="term" value="F:ATP binding"/>
    <property type="evidence" value="ECO:0007669"/>
    <property type="project" value="UniProtKB-KW"/>
</dbReference>
<dbReference type="GO" id="GO:0004674">
    <property type="term" value="F:protein serine/threonine kinase activity"/>
    <property type="evidence" value="ECO:0000318"/>
    <property type="project" value="GO_Central"/>
</dbReference>
<dbReference type="GO" id="GO:0006468">
    <property type="term" value="P:protein phosphorylation"/>
    <property type="evidence" value="ECO:0000250"/>
    <property type="project" value="dictyBase"/>
</dbReference>
<dbReference type="GO" id="GO:0007165">
    <property type="term" value="P:signal transduction"/>
    <property type="evidence" value="ECO:0000318"/>
    <property type="project" value="GO_Central"/>
</dbReference>
<dbReference type="CDD" id="cd14017">
    <property type="entry name" value="STKc_TTBK"/>
    <property type="match status" value="1"/>
</dbReference>
<dbReference type="FunFam" id="1.10.510.10:FF:000481">
    <property type="entry name" value="Asator, isoform D"/>
    <property type="match status" value="1"/>
</dbReference>
<dbReference type="FunFam" id="3.30.200.20:FF:000358">
    <property type="entry name" value="Tau tubulin kinase 2b"/>
    <property type="match status" value="1"/>
</dbReference>
<dbReference type="Gene3D" id="1.10.510.10">
    <property type="entry name" value="Transferase(Phosphotransferase) domain 1"/>
    <property type="match status" value="1"/>
</dbReference>
<dbReference type="InterPro" id="IPR050235">
    <property type="entry name" value="CK1_Ser-Thr_kinase"/>
</dbReference>
<dbReference type="InterPro" id="IPR011009">
    <property type="entry name" value="Kinase-like_dom_sf"/>
</dbReference>
<dbReference type="InterPro" id="IPR000719">
    <property type="entry name" value="Prot_kinase_dom"/>
</dbReference>
<dbReference type="InterPro" id="IPR017441">
    <property type="entry name" value="Protein_kinase_ATP_BS"/>
</dbReference>
<dbReference type="InterPro" id="IPR047916">
    <property type="entry name" value="TTBK_Asator-like_STKc"/>
</dbReference>
<dbReference type="PANTHER" id="PTHR11909">
    <property type="entry name" value="CASEIN KINASE-RELATED"/>
    <property type="match status" value="1"/>
</dbReference>
<dbReference type="Pfam" id="PF00069">
    <property type="entry name" value="Pkinase"/>
    <property type="match status" value="1"/>
</dbReference>
<dbReference type="SMART" id="SM00220">
    <property type="entry name" value="S_TKc"/>
    <property type="match status" value="1"/>
</dbReference>
<dbReference type="SUPFAM" id="SSF56112">
    <property type="entry name" value="Protein kinase-like (PK-like)"/>
    <property type="match status" value="1"/>
</dbReference>
<dbReference type="PROSITE" id="PS00107">
    <property type="entry name" value="PROTEIN_KINASE_ATP"/>
    <property type="match status" value="1"/>
</dbReference>
<dbReference type="PROSITE" id="PS50011">
    <property type="entry name" value="PROTEIN_KINASE_DOM"/>
    <property type="match status" value="1"/>
</dbReference>
<protein>
    <recommendedName>
        <fullName>Probable serine/threonine-protein kinase DDB_G0292354</fullName>
    </recommendedName>
</protein>
<keyword id="KW-0067">ATP-binding</keyword>
<keyword id="KW-0418">Kinase</keyword>
<keyword id="KW-0547">Nucleotide-binding</keyword>
<keyword id="KW-1185">Reference proteome</keyword>
<keyword id="KW-0723">Serine/threonine-protein kinase</keyword>
<keyword id="KW-0808">Transferase</keyword>
<accession>Q54DF7</accession>